<comment type="function">
    <text evidence="1">Phosphorylation of dTMP to form dTDP in both de novo and salvage pathways of dTTP synthesis.</text>
</comment>
<comment type="catalytic activity">
    <reaction evidence="1">
        <text>dTMP + ATP = dTDP + ADP</text>
        <dbReference type="Rhea" id="RHEA:13517"/>
        <dbReference type="ChEBI" id="CHEBI:30616"/>
        <dbReference type="ChEBI" id="CHEBI:58369"/>
        <dbReference type="ChEBI" id="CHEBI:63528"/>
        <dbReference type="ChEBI" id="CHEBI:456216"/>
        <dbReference type="EC" id="2.7.4.9"/>
    </reaction>
</comment>
<comment type="similarity">
    <text evidence="1">Belongs to the thymidylate kinase family.</text>
</comment>
<keyword id="KW-0067">ATP-binding</keyword>
<keyword id="KW-0418">Kinase</keyword>
<keyword id="KW-0545">Nucleotide biosynthesis</keyword>
<keyword id="KW-0547">Nucleotide-binding</keyword>
<keyword id="KW-1185">Reference proteome</keyword>
<keyword id="KW-0808">Transferase</keyword>
<sequence length="217" mass="24338">MFITFEGIEGTGKTTQIKKLTAFLEESGHNVDVTLEPGGSRIGKELRKILLNMDSTDITGECELFLYLADRAQHVGQVIKPAVEAGKIIISDRFADSTIVYQGYGRGLDPKLLRELNDVAVSGNWPDLTILLDIDPEIGLKRAMTRNLQENKMQEEGRFEAESLEFHNRVREGYLTWAALNNDRIVVVNADQTPDEIFKEIKAKVVERIKGDFVTNG</sequence>
<protein>
    <recommendedName>
        <fullName evidence="1">Thymidylate kinase</fullName>
        <ecNumber evidence="1">2.7.4.9</ecNumber>
    </recommendedName>
    <alternativeName>
        <fullName evidence="1">dTMP kinase</fullName>
    </alternativeName>
</protein>
<proteinExistence type="inferred from homology"/>
<name>KTHY_MARSD</name>
<organism>
    <name type="scientific">Maridesulfovibrio salexigens (strain ATCC 14822 / DSM 2638 / NCIMB 8403 / VKM B-1763)</name>
    <name type="common">Desulfovibrio salexigens</name>
    <dbReference type="NCBI Taxonomy" id="526222"/>
    <lineage>
        <taxon>Bacteria</taxon>
        <taxon>Pseudomonadati</taxon>
        <taxon>Thermodesulfobacteriota</taxon>
        <taxon>Desulfovibrionia</taxon>
        <taxon>Desulfovibrionales</taxon>
        <taxon>Desulfovibrionaceae</taxon>
        <taxon>Maridesulfovibrio</taxon>
    </lineage>
</organism>
<gene>
    <name evidence="1" type="primary">tmk</name>
    <name type="ordered locus">Desal_1914</name>
</gene>
<dbReference type="EC" id="2.7.4.9" evidence="1"/>
<dbReference type="EMBL" id="CP001649">
    <property type="protein sequence ID" value="ACS79975.1"/>
    <property type="molecule type" value="Genomic_DNA"/>
</dbReference>
<dbReference type="RefSeq" id="WP_015851791.1">
    <property type="nucleotide sequence ID" value="NC_012881.1"/>
</dbReference>
<dbReference type="SMR" id="C6BUG6"/>
<dbReference type="STRING" id="526222.Desal_1914"/>
<dbReference type="KEGG" id="dsa:Desal_1914"/>
<dbReference type="eggNOG" id="COG0125">
    <property type="taxonomic scope" value="Bacteria"/>
</dbReference>
<dbReference type="HOGENOM" id="CLU_049131_0_0_7"/>
<dbReference type="OrthoDB" id="9774907at2"/>
<dbReference type="Proteomes" id="UP000002601">
    <property type="component" value="Chromosome"/>
</dbReference>
<dbReference type="GO" id="GO:0005829">
    <property type="term" value="C:cytosol"/>
    <property type="evidence" value="ECO:0007669"/>
    <property type="project" value="TreeGrafter"/>
</dbReference>
<dbReference type="GO" id="GO:0005524">
    <property type="term" value="F:ATP binding"/>
    <property type="evidence" value="ECO:0007669"/>
    <property type="project" value="UniProtKB-UniRule"/>
</dbReference>
<dbReference type="GO" id="GO:0004798">
    <property type="term" value="F:dTMP kinase activity"/>
    <property type="evidence" value="ECO:0007669"/>
    <property type="project" value="UniProtKB-UniRule"/>
</dbReference>
<dbReference type="GO" id="GO:0006233">
    <property type="term" value="P:dTDP biosynthetic process"/>
    <property type="evidence" value="ECO:0007669"/>
    <property type="project" value="InterPro"/>
</dbReference>
<dbReference type="GO" id="GO:0006235">
    <property type="term" value="P:dTTP biosynthetic process"/>
    <property type="evidence" value="ECO:0007669"/>
    <property type="project" value="UniProtKB-UniRule"/>
</dbReference>
<dbReference type="GO" id="GO:0006227">
    <property type="term" value="P:dUDP biosynthetic process"/>
    <property type="evidence" value="ECO:0007669"/>
    <property type="project" value="TreeGrafter"/>
</dbReference>
<dbReference type="CDD" id="cd01672">
    <property type="entry name" value="TMPK"/>
    <property type="match status" value="1"/>
</dbReference>
<dbReference type="FunFam" id="3.40.50.300:FF:000225">
    <property type="entry name" value="Thymidylate kinase"/>
    <property type="match status" value="1"/>
</dbReference>
<dbReference type="Gene3D" id="3.40.50.300">
    <property type="entry name" value="P-loop containing nucleotide triphosphate hydrolases"/>
    <property type="match status" value="1"/>
</dbReference>
<dbReference type="HAMAP" id="MF_00165">
    <property type="entry name" value="Thymidylate_kinase"/>
    <property type="match status" value="1"/>
</dbReference>
<dbReference type="InterPro" id="IPR027417">
    <property type="entry name" value="P-loop_NTPase"/>
</dbReference>
<dbReference type="InterPro" id="IPR039430">
    <property type="entry name" value="Thymidylate_kin-like_dom"/>
</dbReference>
<dbReference type="InterPro" id="IPR018095">
    <property type="entry name" value="Thymidylate_kin_CS"/>
</dbReference>
<dbReference type="InterPro" id="IPR018094">
    <property type="entry name" value="Thymidylate_kinase"/>
</dbReference>
<dbReference type="NCBIfam" id="TIGR00041">
    <property type="entry name" value="DTMP_kinase"/>
    <property type="match status" value="1"/>
</dbReference>
<dbReference type="PANTHER" id="PTHR10344">
    <property type="entry name" value="THYMIDYLATE KINASE"/>
    <property type="match status" value="1"/>
</dbReference>
<dbReference type="PANTHER" id="PTHR10344:SF4">
    <property type="entry name" value="UMP-CMP KINASE 2, MITOCHONDRIAL"/>
    <property type="match status" value="1"/>
</dbReference>
<dbReference type="Pfam" id="PF02223">
    <property type="entry name" value="Thymidylate_kin"/>
    <property type="match status" value="1"/>
</dbReference>
<dbReference type="SUPFAM" id="SSF52540">
    <property type="entry name" value="P-loop containing nucleoside triphosphate hydrolases"/>
    <property type="match status" value="1"/>
</dbReference>
<dbReference type="PROSITE" id="PS01331">
    <property type="entry name" value="THYMIDYLATE_KINASE"/>
    <property type="match status" value="1"/>
</dbReference>
<evidence type="ECO:0000255" key="1">
    <source>
        <dbReference type="HAMAP-Rule" id="MF_00165"/>
    </source>
</evidence>
<feature type="chain" id="PRO_1000203611" description="Thymidylate kinase">
    <location>
        <begin position="1"/>
        <end position="217"/>
    </location>
</feature>
<feature type="binding site" evidence="1">
    <location>
        <begin position="7"/>
        <end position="14"/>
    </location>
    <ligand>
        <name>ATP</name>
        <dbReference type="ChEBI" id="CHEBI:30616"/>
    </ligand>
</feature>
<accession>C6BUG6</accession>
<reference key="1">
    <citation type="submission" date="2009-06" db="EMBL/GenBank/DDBJ databases">
        <title>Complete sequence of Desulfovibrio salexigens DSM 2638.</title>
        <authorList>
            <consortium name="US DOE Joint Genome Institute"/>
            <person name="Lucas S."/>
            <person name="Copeland A."/>
            <person name="Lapidus A."/>
            <person name="Glavina del Rio T."/>
            <person name="Tice H."/>
            <person name="Bruce D."/>
            <person name="Goodwin L."/>
            <person name="Pitluck S."/>
            <person name="Munk A.C."/>
            <person name="Brettin T."/>
            <person name="Detter J.C."/>
            <person name="Han C."/>
            <person name="Tapia R."/>
            <person name="Larimer F."/>
            <person name="Land M."/>
            <person name="Hauser L."/>
            <person name="Kyrpides N."/>
            <person name="Anderson I."/>
            <person name="Wall J.D."/>
            <person name="Arkin A.P."/>
            <person name="Dehal P."/>
            <person name="Chivian D."/>
            <person name="Giles B."/>
            <person name="Hazen T.C."/>
        </authorList>
    </citation>
    <scope>NUCLEOTIDE SEQUENCE [LARGE SCALE GENOMIC DNA]</scope>
    <source>
        <strain>ATCC 14822 / DSM 2638 / NCIMB 8403 / VKM B-1763</strain>
    </source>
</reference>